<sequence length="125" mass="14158">MNVLYTKIFFILILTRTSSALKCVQCFTGYGNIVQDCNKTSYSEPKECADPLSNYCFIGTRYENGTEYIQRYCAIFSIKDQCIEKNNIKACIYTCETDGCNSASRLQISSLVTSIISVLYLITFX</sequence>
<name>TX51A_SCOMO</name>
<accession>P0DPX7</accession>
<proteinExistence type="evidence at transcript level"/>
<comment type="subcellular location">
    <subcellularLocation>
        <location evidence="4">Secreted</location>
    </subcellularLocation>
</comment>
<comment type="tissue specificity">
    <text evidence="4">Expressed by the venom gland.</text>
</comment>
<comment type="PTM">
    <text evidence="3">Contains 4 disulfide bonds.</text>
</comment>
<comment type="miscellaneous">
    <text evidence="3">The scoloptoxin-05 family has remarkable similarities with the three-finger toxin family commonly found in snakes.</text>
</comment>
<comment type="similarity">
    <text evidence="3">Belongs to the scoloptoxin-05 family.</text>
</comment>
<comment type="online information" name="National Center for Biotechnology Information (NCBI)">
    <link uri="https://www.ncbi.nlm.nih.gov/nuccore/GASH01000179"/>
</comment>
<evidence type="ECO:0000255" key="1"/>
<evidence type="ECO:0000303" key="2">
    <source>
    </source>
</evidence>
<evidence type="ECO:0000305" key="3"/>
<evidence type="ECO:0000305" key="4">
    <source>
    </source>
</evidence>
<organism>
    <name type="scientific">Scolopendra morsitans</name>
    <name type="common">Tanzanian blue ringleg centipede</name>
    <dbReference type="NCBI Taxonomy" id="943129"/>
    <lineage>
        <taxon>Eukaryota</taxon>
        <taxon>Metazoa</taxon>
        <taxon>Ecdysozoa</taxon>
        <taxon>Arthropoda</taxon>
        <taxon>Myriapoda</taxon>
        <taxon>Chilopoda</taxon>
        <taxon>Pleurostigmophora</taxon>
        <taxon>Scolopendromorpha</taxon>
        <taxon>Scolopendridae</taxon>
        <taxon>Scolopendra</taxon>
    </lineage>
</organism>
<keyword id="KW-1015">Disulfide bond</keyword>
<keyword id="KW-0964">Secreted</keyword>
<keyword id="KW-0732">Signal</keyword>
<keyword id="KW-0800">Toxin</keyword>
<dbReference type="GO" id="GO:0005576">
    <property type="term" value="C:extracellular region"/>
    <property type="evidence" value="ECO:0007669"/>
    <property type="project" value="UniProtKB-SubCell"/>
</dbReference>
<dbReference type="GO" id="GO:0090729">
    <property type="term" value="F:toxin activity"/>
    <property type="evidence" value="ECO:0007669"/>
    <property type="project" value="UniProtKB-KW"/>
</dbReference>
<dbReference type="CDD" id="cd23590">
    <property type="entry name" value="TFP_LU_ECD_Bou"/>
    <property type="match status" value="1"/>
</dbReference>
<dbReference type="InterPro" id="IPR050975">
    <property type="entry name" value="Sleep_regulator"/>
</dbReference>
<dbReference type="InterPro" id="IPR045860">
    <property type="entry name" value="Snake_toxin-like_sf"/>
</dbReference>
<dbReference type="PANTHER" id="PTHR33562">
    <property type="entry name" value="ATILLA, ISOFORM B-RELATED-RELATED"/>
    <property type="match status" value="1"/>
</dbReference>
<dbReference type="SUPFAM" id="SSF57302">
    <property type="entry name" value="Snake toxin-like"/>
    <property type="match status" value="1"/>
</dbReference>
<protein>
    <recommendedName>
        <fullName evidence="2">U-scoloptoxin(05)-Sm1a</fullName>
        <shortName evidence="2">U-SLPTX(05)-Sm1a</shortName>
    </recommendedName>
</protein>
<feature type="signal peptide" evidence="1">
    <location>
        <begin position="1"/>
        <end position="20"/>
    </location>
</feature>
<feature type="chain" id="PRO_0000446721" description="U-scoloptoxin(05)-Sm1a" evidence="3">
    <location>
        <begin position="21"/>
        <end position="125"/>
    </location>
</feature>
<reference key="1">
    <citation type="journal article" date="2014" name="Mol. Biol. Evol.">
        <title>Clawing through evolution: toxin diversification and convergence in the ancient lineage Chilopoda (centipedes).</title>
        <authorList>
            <person name="Undheim E.A."/>
            <person name="Jones A."/>
            <person name="Clauser K.R."/>
            <person name="Holland J.W."/>
            <person name="Pineda S.S."/>
            <person name="King G.F."/>
            <person name="Fry B.G."/>
        </authorList>
    </citation>
    <scope>NUCLEOTIDE SEQUENCE [MRNA]</scope>
    <scope>NOMENCLATURE</scope>
    <source>
        <tissue>Venom gland</tissue>
    </source>
</reference>